<sequence>MKETRPIIALDFAGKEEVQSFLEQFPPDEKLYVKVGMELYYAEGPGIINYLKDCGHSIFLDLKLHDIPNTVESAMKVLAKLGVDMTNVHAAGGVEMMRAARRGLGKDAVLIAVTQLTSTSEEQMRTDQNIQTSLQEAVVHYAQRAQEAGLDGVVCSAHEVALIKDATSSDFVCLTPGIRPTGGEVGDQKRVMTPADAARIGSDYIVVGRPITKSEHPYQTYLSIKEEWNRG</sequence>
<gene>
    <name evidence="1" type="primary">pyrF</name>
    <name type="ordered locus">SSU98_1020</name>
</gene>
<protein>
    <recommendedName>
        <fullName evidence="1">Orotidine 5'-phosphate decarboxylase</fullName>
        <ecNumber evidence="1">4.1.1.23</ecNumber>
    </recommendedName>
    <alternativeName>
        <fullName evidence="1">OMP decarboxylase</fullName>
        <shortName evidence="1">OMPDCase</shortName>
        <shortName evidence="1">OMPdecase</shortName>
    </alternativeName>
</protein>
<evidence type="ECO:0000255" key="1">
    <source>
        <dbReference type="HAMAP-Rule" id="MF_01200"/>
    </source>
</evidence>
<feature type="chain" id="PRO_1000065951" description="Orotidine 5'-phosphate decarboxylase">
    <location>
        <begin position="1"/>
        <end position="231"/>
    </location>
</feature>
<feature type="active site" description="Proton donor" evidence="1">
    <location>
        <position position="63"/>
    </location>
</feature>
<feature type="binding site" evidence="1">
    <location>
        <position position="11"/>
    </location>
    <ligand>
        <name>substrate</name>
    </ligand>
</feature>
<feature type="binding site" evidence="1">
    <location>
        <position position="34"/>
    </location>
    <ligand>
        <name>substrate</name>
    </ligand>
</feature>
<feature type="binding site" evidence="1">
    <location>
        <begin position="61"/>
        <end position="70"/>
    </location>
    <ligand>
        <name>substrate</name>
    </ligand>
</feature>
<feature type="binding site" evidence="1">
    <location>
        <position position="117"/>
    </location>
    <ligand>
        <name>substrate</name>
    </ligand>
</feature>
<feature type="binding site" evidence="1">
    <location>
        <position position="179"/>
    </location>
    <ligand>
        <name>substrate</name>
    </ligand>
</feature>
<feature type="binding site" evidence="1">
    <location>
        <position position="188"/>
    </location>
    <ligand>
        <name>substrate</name>
    </ligand>
</feature>
<feature type="binding site" evidence="1">
    <location>
        <position position="208"/>
    </location>
    <ligand>
        <name>substrate</name>
    </ligand>
</feature>
<feature type="binding site" evidence="1">
    <location>
        <position position="209"/>
    </location>
    <ligand>
        <name>substrate</name>
    </ligand>
</feature>
<keyword id="KW-0210">Decarboxylase</keyword>
<keyword id="KW-0456">Lyase</keyword>
<keyword id="KW-0665">Pyrimidine biosynthesis</keyword>
<comment type="function">
    <text evidence="1">Catalyzes the decarboxylation of orotidine 5'-monophosphate (OMP) to uridine 5'-monophosphate (UMP).</text>
</comment>
<comment type="catalytic activity">
    <reaction evidence="1">
        <text>orotidine 5'-phosphate + H(+) = UMP + CO2</text>
        <dbReference type="Rhea" id="RHEA:11596"/>
        <dbReference type="ChEBI" id="CHEBI:15378"/>
        <dbReference type="ChEBI" id="CHEBI:16526"/>
        <dbReference type="ChEBI" id="CHEBI:57538"/>
        <dbReference type="ChEBI" id="CHEBI:57865"/>
        <dbReference type="EC" id="4.1.1.23"/>
    </reaction>
</comment>
<comment type="pathway">
    <text evidence="1">Pyrimidine metabolism; UMP biosynthesis via de novo pathway; UMP from orotate: step 2/2.</text>
</comment>
<comment type="subunit">
    <text evidence="1">Homodimer.</text>
</comment>
<comment type="similarity">
    <text evidence="1">Belongs to the OMP decarboxylase family. Type 1 subfamily.</text>
</comment>
<proteinExistence type="inferred from homology"/>
<organism>
    <name type="scientific">Streptococcus suis (strain 98HAH33)</name>
    <dbReference type="NCBI Taxonomy" id="391296"/>
    <lineage>
        <taxon>Bacteria</taxon>
        <taxon>Bacillati</taxon>
        <taxon>Bacillota</taxon>
        <taxon>Bacilli</taxon>
        <taxon>Lactobacillales</taxon>
        <taxon>Streptococcaceae</taxon>
        <taxon>Streptococcus</taxon>
    </lineage>
</organism>
<reference key="1">
    <citation type="journal article" date="2007" name="PLoS ONE">
        <title>A glimpse of streptococcal toxic shock syndrome from comparative genomics of S. suis 2 Chinese isolates.</title>
        <authorList>
            <person name="Chen C."/>
            <person name="Tang J."/>
            <person name="Dong W."/>
            <person name="Wang C."/>
            <person name="Feng Y."/>
            <person name="Wang J."/>
            <person name="Zheng F."/>
            <person name="Pan X."/>
            <person name="Liu D."/>
            <person name="Li M."/>
            <person name="Song Y."/>
            <person name="Zhu X."/>
            <person name="Sun H."/>
            <person name="Feng T."/>
            <person name="Guo Z."/>
            <person name="Ju A."/>
            <person name="Ge J."/>
            <person name="Dong Y."/>
            <person name="Sun W."/>
            <person name="Jiang Y."/>
            <person name="Wang J."/>
            <person name="Yan J."/>
            <person name="Yang H."/>
            <person name="Wang X."/>
            <person name="Gao G.F."/>
            <person name="Yang R."/>
            <person name="Wang J."/>
            <person name="Yu J."/>
        </authorList>
    </citation>
    <scope>NUCLEOTIDE SEQUENCE [LARGE SCALE GENOMIC DNA]</scope>
    <source>
        <strain>98HAH33</strain>
    </source>
</reference>
<name>PYRF_STRS2</name>
<dbReference type="EC" id="4.1.1.23" evidence="1"/>
<dbReference type="EMBL" id="CP000408">
    <property type="protein sequence ID" value="ABP92178.1"/>
    <property type="molecule type" value="Genomic_DNA"/>
</dbReference>
<dbReference type="SMR" id="A4W1D9"/>
<dbReference type="KEGG" id="ssv:SSU98_1020"/>
<dbReference type="HOGENOM" id="CLU_067069_1_1_9"/>
<dbReference type="UniPathway" id="UPA00070">
    <property type="reaction ID" value="UER00120"/>
</dbReference>
<dbReference type="GO" id="GO:0005829">
    <property type="term" value="C:cytosol"/>
    <property type="evidence" value="ECO:0007669"/>
    <property type="project" value="TreeGrafter"/>
</dbReference>
<dbReference type="GO" id="GO:0004590">
    <property type="term" value="F:orotidine-5'-phosphate decarboxylase activity"/>
    <property type="evidence" value="ECO:0007669"/>
    <property type="project" value="UniProtKB-UniRule"/>
</dbReference>
<dbReference type="GO" id="GO:0006207">
    <property type="term" value="P:'de novo' pyrimidine nucleobase biosynthetic process"/>
    <property type="evidence" value="ECO:0007669"/>
    <property type="project" value="InterPro"/>
</dbReference>
<dbReference type="GO" id="GO:0044205">
    <property type="term" value="P:'de novo' UMP biosynthetic process"/>
    <property type="evidence" value="ECO:0007669"/>
    <property type="project" value="UniProtKB-UniRule"/>
</dbReference>
<dbReference type="CDD" id="cd04725">
    <property type="entry name" value="OMP_decarboxylase_like"/>
    <property type="match status" value="1"/>
</dbReference>
<dbReference type="FunFam" id="3.20.20.70:FF:000015">
    <property type="entry name" value="Orotidine 5'-phosphate decarboxylase"/>
    <property type="match status" value="1"/>
</dbReference>
<dbReference type="Gene3D" id="3.20.20.70">
    <property type="entry name" value="Aldolase class I"/>
    <property type="match status" value="1"/>
</dbReference>
<dbReference type="HAMAP" id="MF_01200_B">
    <property type="entry name" value="OMPdecase_type1_B"/>
    <property type="match status" value="1"/>
</dbReference>
<dbReference type="InterPro" id="IPR013785">
    <property type="entry name" value="Aldolase_TIM"/>
</dbReference>
<dbReference type="InterPro" id="IPR014732">
    <property type="entry name" value="OMPdecase"/>
</dbReference>
<dbReference type="InterPro" id="IPR018089">
    <property type="entry name" value="OMPdecase_AS"/>
</dbReference>
<dbReference type="InterPro" id="IPR047596">
    <property type="entry name" value="OMPdecase_bac"/>
</dbReference>
<dbReference type="InterPro" id="IPR001754">
    <property type="entry name" value="OMPdeCOase_dom"/>
</dbReference>
<dbReference type="InterPro" id="IPR011060">
    <property type="entry name" value="RibuloseP-bd_barrel"/>
</dbReference>
<dbReference type="NCBIfam" id="NF001273">
    <property type="entry name" value="PRK00230.1"/>
    <property type="match status" value="1"/>
</dbReference>
<dbReference type="NCBIfam" id="TIGR01740">
    <property type="entry name" value="pyrF"/>
    <property type="match status" value="1"/>
</dbReference>
<dbReference type="PANTHER" id="PTHR32119">
    <property type="entry name" value="OROTIDINE 5'-PHOSPHATE DECARBOXYLASE"/>
    <property type="match status" value="1"/>
</dbReference>
<dbReference type="PANTHER" id="PTHR32119:SF2">
    <property type="entry name" value="OROTIDINE 5'-PHOSPHATE DECARBOXYLASE"/>
    <property type="match status" value="1"/>
</dbReference>
<dbReference type="Pfam" id="PF00215">
    <property type="entry name" value="OMPdecase"/>
    <property type="match status" value="1"/>
</dbReference>
<dbReference type="SMART" id="SM00934">
    <property type="entry name" value="OMPdecase"/>
    <property type="match status" value="1"/>
</dbReference>
<dbReference type="SUPFAM" id="SSF51366">
    <property type="entry name" value="Ribulose-phoshate binding barrel"/>
    <property type="match status" value="1"/>
</dbReference>
<dbReference type="PROSITE" id="PS00156">
    <property type="entry name" value="OMPDECASE"/>
    <property type="match status" value="1"/>
</dbReference>
<accession>A4W1D9</accession>